<protein>
    <recommendedName>
        <fullName evidence="1">Large ribosomal subunit protein uL22</fullName>
    </recommendedName>
    <alternativeName>
        <fullName evidence="2">50S ribosomal protein L22</fullName>
    </alternativeName>
</protein>
<name>RL22_PSEPK</name>
<sequence length="110" mass="11911">MEVAAKLSGARISAQKARLVADQIRGKKVGEALNLLAFSSKKAAEIMKKVLESAVANAEHNEGADVDDLKVSTVFVNEGRSLKRIMPRAKGRADRIVKRSCHITVKVADK</sequence>
<feature type="chain" id="PRO_0000125206" description="Large ribosomal subunit protein uL22">
    <location>
        <begin position="1"/>
        <end position="110"/>
    </location>
</feature>
<organism>
    <name type="scientific">Pseudomonas putida (strain ATCC 47054 / DSM 6125 / CFBP 8728 / NCIMB 11950 / KT2440)</name>
    <dbReference type="NCBI Taxonomy" id="160488"/>
    <lineage>
        <taxon>Bacteria</taxon>
        <taxon>Pseudomonadati</taxon>
        <taxon>Pseudomonadota</taxon>
        <taxon>Gammaproteobacteria</taxon>
        <taxon>Pseudomonadales</taxon>
        <taxon>Pseudomonadaceae</taxon>
        <taxon>Pseudomonas</taxon>
    </lineage>
</organism>
<comment type="function">
    <text evidence="1">This protein binds specifically to 23S rRNA; its binding is stimulated by other ribosomal proteins, e.g. L4, L17, and L20. It is important during the early stages of 50S assembly. It makes multiple contacts with different domains of the 23S rRNA in the assembled 50S subunit and ribosome (By similarity).</text>
</comment>
<comment type="function">
    <text evidence="1">The globular domain of the protein is located near the polypeptide exit tunnel on the outside of the subunit, while an extended beta-hairpin is found that lines the wall of the exit tunnel in the center of the 70S ribosome.</text>
</comment>
<comment type="subunit">
    <text evidence="1">Part of the 50S ribosomal subunit.</text>
</comment>
<comment type="similarity">
    <text evidence="1">Belongs to the universal ribosomal protein uL22 family.</text>
</comment>
<accession>Q88QN0</accession>
<gene>
    <name evidence="1" type="primary">rplV</name>
    <name type="ordered locus">PP_0459</name>
</gene>
<reference key="1">
    <citation type="journal article" date="2002" name="Environ. Microbiol.">
        <title>Complete genome sequence and comparative analysis of the metabolically versatile Pseudomonas putida KT2440.</title>
        <authorList>
            <person name="Nelson K.E."/>
            <person name="Weinel C."/>
            <person name="Paulsen I.T."/>
            <person name="Dodson R.J."/>
            <person name="Hilbert H."/>
            <person name="Martins dos Santos V.A.P."/>
            <person name="Fouts D.E."/>
            <person name="Gill S.R."/>
            <person name="Pop M."/>
            <person name="Holmes M."/>
            <person name="Brinkac L.M."/>
            <person name="Beanan M.J."/>
            <person name="DeBoy R.T."/>
            <person name="Daugherty S.C."/>
            <person name="Kolonay J.F."/>
            <person name="Madupu R."/>
            <person name="Nelson W.C."/>
            <person name="White O."/>
            <person name="Peterson J.D."/>
            <person name="Khouri H.M."/>
            <person name="Hance I."/>
            <person name="Chris Lee P."/>
            <person name="Holtzapple E.K."/>
            <person name="Scanlan D."/>
            <person name="Tran K."/>
            <person name="Moazzez A."/>
            <person name="Utterback T.R."/>
            <person name="Rizzo M."/>
            <person name="Lee K."/>
            <person name="Kosack D."/>
            <person name="Moestl D."/>
            <person name="Wedler H."/>
            <person name="Lauber J."/>
            <person name="Stjepandic D."/>
            <person name="Hoheisel J."/>
            <person name="Straetz M."/>
            <person name="Heim S."/>
            <person name="Kiewitz C."/>
            <person name="Eisen J.A."/>
            <person name="Timmis K.N."/>
            <person name="Duesterhoeft A."/>
            <person name="Tuemmler B."/>
            <person name="Fraser C.M."/>
        </authorList>
    </citation>
    <scope>NUCLEOTIDE SEQUENCE [LARGE SCALE GENOMIC DNA]</scope>
    <source>
        <strain>ATCC 47054 / DSM 6125 / CFBP 8728 / NCIMB 11950 / KT2440</strain>
    </source>
</reference>
<keyword id="KW-1185">Reference proteome</keyword>
<keyword id="KW-0687">Ribonucleoprotein</keyword>
<keyword id="KW-0689">Ribosomal protein</keyword>
<keyword id="KW-0694">RNA-binding</keyword>
<keyword id="KW-0699">rRNA-binding</keyword>
<evidence type="ECO:0000255" key="1">
    <source>
        <dbReference type="HAMAP-Rule" id="MF_01331"/>
    </source>
</evidence>
<evidence type="ECO:0000305" key="2"/>
<proteinExistence type="inferred from homology"/>
<dbReference type="EMBL" id="AE015451">
    <property type="protein sequence ID" value="AAN66089.1"/>
    <property type="molecule type" value="Genomic_DNA"/>
</dbReference>
<dbReference type="RefSeq" id="NP_742625.1">
    <property type="nucleotide sequence ID" value="NC_002947.4"/>
</dbReference>
<dbReference type="RefSeq" id="WP_003103908.1">
    <property type="nucleotide sequence ID" value="NZ_CP169744.1"/>
</dbReference>
<dbReference type="SMR" id="Q88QN0"/>
<dbReference type="STRING" id="160488.PP_0459"/>
<dbReference type="PaxDb" id="160488-PP_0459"/>
<dbReference type="GeneID" id="98636788"/>
<dbReference type="KEGG" id="ppu:PP_0459"/>
<dbReference type="PATRIC" id="fig|160488.4.peg.491"/>
<dbReference type="eggNOG" id="COG0091">
    <property type="taxonomic scope" value="Bacteria"/>
</dbReference>
<dbReference type="HOGENOM" id="CLU_083987_3_3_6"/>
<dbReference type="OrthoDB" id="9805969at2"/>
<dbReference type="PhylomeDB" id="Q88QN0"/>
<dbReference type="BioCyc" id="PPUT160488:G1G01-505-MONOMER"/>
<dbReference type="PRO" id="PR:Q88QN0"/>
<dbReference type="Proteomes" id="UP000000556">
    <property type="component" value="Chromosome"/>
</dbReference>
<dbReference type="GO" id="GO:0022625">
    <property type="term" value="C:cytosolic large ribosomal subunit"/>
    <property type="evidence" value="ECO:0007669"/>
    <property type="project" value="TreeGrafter"/>
</dbReference>
<dbReference type="GO" id="GO:0019843">
    <property type="term" value="F:rRNA binding"/>
    <property type="evidence" value="ECO:0007669"/>
    <property type="project" value="UniProtKB-UniRule"/>
</dbReference>
<dbReference type="GO" id="GO:0003735">
    <property type="term" value="F:structural constituent of ribosome"/>
    <property type="evidence" value="ECO:0007669"/>
    <property type="project" value="InterPro"/>
</dbReference>
<dbReference type="GO" id="GO:0006412">
    <property type="term" value="P:translation"/>
    <property type="evidence" value="ECO:0007669"/>
    <property type="project" value="UniProtKB-UniRule"/>
</dbReference>
<dbReference type="CDD" id="cd00336">
    <property type="entry name" value="Ribosomal_L22"/>
    <property type="match status" value="1"/>
</dbReference>
<dbReference type="FunFam" id="3.90.470.10:FF:000001">
    <property type="entry name" value="50S ribosomal protein L22"/>
    <property type="match status" value="1"/>
</dbReference>
<dbReference type="Gene3D" id="3.90.470.10">
    <property type="entry name" value="Ribosomal protein L22/L17"/>
    <property type="match status" value="1"/>
</dbReference>
<dbReference type="HAMAP" id="MF_01331_B">
    <property type="entry name" value="Ribosomal_uL22_B"/>
    <property type="match status" value="1"/>
</dbReference>
<dbReference type="InterPro" id="IPR001063">
    <property type="entry name" value="Ribosomal_uL22"/>
</dbReference>
<dbReference type="InterPro" id="IPR005727">
    <property type="entry name" value="Ribosomal_uL22_bac/chlpt-type"/>
</dbReference>
<dbReference type="InterPro" id="IPR047867">
    <property type="entry name" value="Ribosomal_uL22_bac/org-type"/>
</dbReference>
<dbReference type="InterPro" id="IPR018260">
    <property type="entry name" value="Ribosomal_uL22_CS"/>
</dbReference>
<dbReference type="InterPro" id="IPR036394">
    <property type="entry name" value="Ribosomal_uL22_sf"/>
</dbReference>
<dbReference type="NCBIfam" id="TIGR01044">
    <property type="entry name" value="rplV_bact"/>
    <property type="match status" value="1"/>
</dbReference>
<dbReference type="PANTHER" id="PTHR13501">
    <property type="entry name" value="CHLOROPLAST 50S RIBOSOMAL PROTEIN L22-RELATED"/>
    <property type="match status" value="1"/>
</dbReference>
<dbReference type="PANTHER" id="PTHR13501:SF8">
    <property type="entry name" value="LARGE RIBOSOMAL SUBUNIT PROTEIN UL22M"/>
    <property type="match status" value="1"/>
</dbReference>
<dbReference type="Pfam" id="PF00237">
    <property type="entry name" value="Ribosomal_L22"/>
    <property type="match status" value="1"/>
</dbReference>
<dbReference type="SUPFAM" id="SSF54843">
    <property type="entry name" value="Ribosomal protein L22"/>
    <property type="match status" value="1"/>
</dbReference>
<dbReference type="PROSITE" id="PS00464">
    <property type="entry name" value="RIBOSOMAL_L22"/>
    <property type="match status" value="1"/>
</dbReference>